<keyword id="KW-0050">Antiport</keyword>
<keyword id="KW-1003">Cell membrane</keyword>
<keyword id="KW-0375">Hydrogen ion transport</keyword>
<keyword id="KW-0406">Ion transport</keyword>
<keyword id="KW-0472">Membrane</keyword>
<keyword id="KW-0915">Sodium</keyword>
<keyword id="KW-0739">Sodium transport</keyword>
<keyword id="KW-0812">Transmembrane</keyword>
<keyword id="KW-1133">Transmembrane helix</keyword>
<keyword id="KW-0813">Transport</keyword>
<accession>Q2YWT4</accession>
<gene>
    <name type="primary">mnhA1</name>
    <name type="ordered locus">SAB0819c</name>
</gene>
<feature type="chain" id="PRO_0000372093" description="Na(+)/H(+) antiporter subunit A1">
    <location>
        <begin position="1"/>
        <end position="801"/>
    </location>
</feature>
<feature type="transmembrane region" description="Helical" evidence="2">
    <location>
        <begin position="1"/>
        <end position="21"/>
    </location>
</feature>
<feature type="transmembrane region" description="Helical" evidence="2">
    <location>
        <begin position="28"/>
        <end position="48"/>
    </location>
</feature>
<feature type="transmembrane region" description="Helical" evidence="2">
    <location>
        <begin position="79"/>
        <end position="99"/>
    </location>
</feature>
<feature type="transmembrane region" description="Helical" evidence="2">
    <location>
        <begin position="117"/>
        <end position="137"/>
    </location>
</feature>
<feature type="transmembrane region" description="Helical" evidence="2">
    <location>
        <begin position="166"/>
        <end position="186"/>
    </location>
</feature>
<feature type="transmembrane region" description="Helical" evidence="2">
    <location>
        <begin position="206"/>
        <end position="226"/>
    </location>
</feature>
<feature type="transmembrane region" description="Helical" evidence="2">
    <location>
        <begin position="265"/>
        <end position="285"/>
    </location>
</feature>
<feature type="transmembrane region" description="Helical" evidence="2">
    <location>
        <begin position="300"/>
        <end position="320"/>
    </location>
</feature>
<feature type="transmembrane region" description="Helical" evidence="2">
    <location>
        <begin position="337"/>
        <end position="357"/>
    </location>
</feature>
<feature type="transmembrane region" description="Helical" evidence="2">
    <location>
        <begin position="373"/>
        <end position="393"/>
    </location>
</feature>
<feature type="transmembrane region" description="Helical" evidence="2">
    <location>
        <begin position="427"/>
        <end position="447"/>
    </location>
</feature>
<feature type="transmembrane region" description="Helical" evidence="2">
    <location>
        <begin position="472"/>
        <end position="492"/>
    </location>
</feature>
<feature type="transmembrane region" description="Helical" evidence="2">
    <location>
        <begin position="522"/>
        <end position="542"/>
    </location>
</feature>
<feature type="transmembrane region" description="Helical" evidence="2">
    <location>
        <begin position="591"/>
        <end position="611"/>
    </location>
</feature>
<feature type="transmembrane region" description="Helical" evidence="2">
    <location>
        <begin position="623"/>
        <end position="643"/>
    </location>
</feature>
<feature type="transmembrane region" description="Helical" evidence="2">
    <location>
        <begin position="646"/>
        <end position="666"/>
    </location>
</feature>
<feature type="transmembrane region" description="Helical" evidence="2">
    <location>
        <begin position="671"/>
        <end position="691"/>
    </location>
</feature>
<feature type="transmembrane region" description="Helical" evidence="2">
    <location>
        <begin position="707"/>
        <end position="727"/>
    </location>
</feature>
<feature type="transmembrane region" description="Helical" evidence="2">
    <location>
        <begin position="764"/>
        <end position="784"/>
    </location>
</feature>
<organism>
    <name type="scientific">Staphylococcus aureus (strain bovine RF122 / ET3-1)</name>
    <dbReference type="NCBI Taxonomy" id="273036"/>
    <lineage>
        <taxon>Bacteria</taxon>
        <taxon>Bacillati</taxon>
        <taxon>Bacillota</taxon>
        <taxon>Bacilli</taxon>
        <taxon>Bacillales</taxon>
        <taxon>Staphylococcaceae</taxon>
        <taxon>Staphylococcus</taxon>
    </lineage>
</organism>
<dbReference type="EMBL" id="AJ938182">
    <property type="protein sequence ID" value="CAI80507.1"/>
    <property type="molecule type" value="Genomic_DNA"/>
</dbReference>
<dbReference type="RefSeq" id="WP_000054620.1">
    <property type="nucleotide sequence ID" value="NC_007622.1"/>
</dbReference>
<dbReference type="SMR" id="Q2YWT4"/>
<dbReference type="KEGG" id="sab:SAB0819c"/>
<dbReference type="HOGENOM" id="CLU_007100_2_1_9"/>
<dbReference type="GO" id="GO:0005886">
    <property type="term" value="C:plasma membrane"/>
    <property type="evidence" value="ECO:0007669"/>
    <property type="project" value="UniProtKB-SubCell"/>
</dbReference>
<dbReference type="GO" id="GO:0015297">
    <property type="term" value="F:antiporter activity"/>
    <property type="evidence" value="ECO:0007669"/>
    <property type="project" value="UniProtKB-KW"/>
</dbReference>
<dbReference type="GO" id="GO:1902600">
    <property type="term" value="P:proton transmembrane transport"/>
    <property type="evidence" value="ECO:0007669"/>
    <property type="project" value="UniProtKB-KW"/>
</dbReference>
<dbReference type="GO" id="GO:0006814">
    <property type="term" value="P:sodium ion transport"/>
    <property type="evidence" value="ECO:0007669"/>
    <property type="project" value="UniProtKB-KW"/>
</dbReference>
<dbReference type="InterPro" id="IPR050616">
    <property type="entry name" value="CPA3_Na-H_Antiporter_A"/>
</dbReference>
<dbReference type="InterPro" id="IPR005663">
    <property type="entry name" value="MrpA/MnhA1/PhaAB"/>
</dbReference>
<dbReference type="InterPro" id="IPR025383">
    <property type="entry name" value="MrpA_C/MbhD"/>
</dbReference>
<dbReference type="InterPro" id="IPR046806">
    <property type="entry name" value="MrpA_C/MbhE"/>
</dbReference>
<dbReference type="InterPro" id="IPR001750">
    <property type="entry name" value="ND/Mrp_TM"/>
</dbReference>
<dbReference type="InterPro" id="IPR001516">
    <property type="entry name" value="Proton_antipo_N"/>
</dbReference>
<dbReference type="NCBIfam" id="TIGR00940">
    <property type="entry name" value="2a6301s01"/>
    <property type="match status" value="1"/>
</dbReference>
<dbReference type="NCBIfam" id="NF009285">
    <property type="entry name" value="PRK12645.1"/>
    <property type="match status" value="1"/>
</dbReference>
<dbReference type="PANTHER" id="PTHR43373">
    <property type="entry name" value="NA(+)/H(+) ANTIPORTER SUBUNIT"/>
    <property type="match status" value="1"/>
</dbReference>
<dbReference type="PANTHER" id="PTHR43373:SF1">
    <property type="entry name" value="NA(+)_H(+) ANTIPORTER SUBUNIT A"/>
    <property type="match status" value="1"/>
</dbReference>
<dbReference type="Pfam" id="PF13244">
    <property type="entry name" value="MbhD"/>
    <property type="match status" value="1"/>
</dbReference>
<dbReference type="Pfam" id="PF20501">
    <property type="entry name" value="MbhE"/>
    <property type="match status" value="1"/>
</dbReference>
<dbReference type="Pfam" id="PF00361">
    <property type="entry name" value="Proton_antipo_M"/>
    <property type="match status" value="1"/>
</dbReference>
<dbReference type="Pfam" id="PF00662">
    <property type="entry name" value="Proton_antipo_N"/>
    <property type="match status" value="1"/>
</dbReference>
<dbReference type="PRINTS" id="PR01434">
    <property type="entry name" value="NADHDHGNASE5"/>
</dbReference>
<dbReference type="PRINTS" id="PR01435">
    <property type="entry name" value="NPOXDRDTASE5"/>
</dbReference>
<evidence type="ECO:0000250" key="1"/>
<evidence type="ECO:0000255" key="2"/>
<evidence type="ECO:0000305" key="3"/>
<proteinExistence type="inferred from homology"/>
<protein>
    <recommendedName>
        <fullName>Na(+)/H(+) antiporter subunit A1</fullName>
    </recommendedName>
    <alternativeName>
        <fullName>Mnh complex subunit A1</fullName>
    </alternativeName>
</protein>
<comment type="function">
    <text evidence="1">Mnh complex is a Na(+)/H(+) antiporter involved in Na(+) excretion.</text>
</comment>
<comment type="subunit">
    <text evidence="1">May form a heterooligomeric complex that consists of seven subunits: mnhA1, mnhB1, mnhC1, mnhD1, mnhE1, mnhF1 and mnhG1.</text>
</comment>
<comment type="subcellular location">
    <subcellularLocation>
        <location evidence="3">Cell membrane</location>
        <topology evidence="3">Multi-pass membrane protein</topology>
    </subcellularLocation>
</comment>
<comment type="similarity">
    <text evidence="3">Belongs to the CPA3 antiporters (TC 2.A.63) subunit A family.</text>
</comment>
<sequence length="801" mass="89478">MSLLHIAVILPLIFVLIIPILYRFFKRIHLGWFVLPVPIVIFIYMLTLIKTTMSGNTVMKTLNWMPHFGMNFDLYLDGLGLLFSLLISGIGSLVVLYSIGYLNKSEQLGNFYCYLLLFMGAMLGVVLSDNVIILYLFWELTSFSSFLLISFWRERQASIYGAQKSLIITVFGGLSLLGGIILLAIPTQSFSIQYMIQHASEIQNSPFFIFAMILIMIGAFTKSAQFPFYIWLPDAMEAPTPVSAYLHSATMVKAGLYLIARMTPIFAASQGWIWTVTLVGLITLFWASLNATKQQDLKGILAFSTVSQLGMIMAMLGIGAISYHYQGDDSKIYAAAFTAAIFHLINHATFKGALFMITGAVDHSTGTRDVKKLGGLLTIMPISFTITVITALSMAGVPPFNGFLSKESFLETTFTASQANLFSVDTLGYLFPIIGIVGSVFTFVYSIKFIMHIFFGQYKPEQLPKKAHEVSILMLLSPAILATLVIVFGLFPGILTNSIIEPATSSINHTVIDDVEFHMFHGLTPAFLSTLVIYILGILLIVTFSYWVKLLQRQPGKLTFNYWYNRSANVIPNYSEKMTNSYVTDYSRNNLVIIFGALILLTFVTVFSVPFNINFKDVSPIRIFEVCIVILLLSAAFLILFAKSRLFNIIMLSAVGYAVSVLFIFFKAPDLALTQFVVESISTALFLLCFYHLPNLNRYNEKRSFQLTNALIAGGVGLSVIIIGLIAYGNRHFESISKFYQEHVYDLAHGKNMVNVILVDFRGMDTLFESSVLGIAGLAVYTMIKLRKKRQTQGNEVKNHE</sequence>
<reference key="1">
    <citation type="journal article" date="2007" name="PLoS ONE">
        <title>Molecular correlates of host specialization in Staphylococcus aureus.</title>
        <authorList>
            <person name="Herron-Olson L."/>
            <person name="Fitzgerald J.R."/>
            <person name="Musser J.M."/>
            <person name="Kapur V."/>
        </authorList>
    </citation>
    <scope>NUCLEOTIDE SEQUENCE [LARGE SCALE GENOMIC DNA]</scope>
    <source>
        <strain>bovine RF122 / ET3-1</strain>
    </source>
</reference>
<name>MNHA1_STAAB</name>